<organism>
    <name type="scientific">Vibrio cholerae serotype O1 (strain ATCC 39315 / El Tor Inaba N16961)</name>
    <dbReference type="NCBI Taxonomy" id="243277"/>
    <lineage>
        <taxon>Bacteria</taxon>
        <taxon>Pseudomonadati</taxon>
        <taxon>Pseudomonadota</taxon>
        <taxon>Gammaproteobacteria</taxon>
        <taxon>Vibrionales</taxon>
        <taxon>Vibrionaceae</taxon>
        <taxon>Vibrio</taxon>
    </lineage>
</organism>
<evidence type="ECO:0000255" key="1">
    <source>
        <dbReference type="HAMAP-Rule" id="MF_00075"/>
    </source>
</evidence>
<keyword id="KW-0963">Cytoplasm</keyword>
<keyword id="KW-0396">Initiation factor</keyword>
<keyword id="KW-0648">Protein biosynthesis</keyword>
<keyword id="KW-1185">Reference proteome</keyword>
<keyword id="KW-0694">RNA-binding</keyword>
<keyword id="KW-0699">rRNA-binding</keyword>
<protein>
    <recommendedName>
        <fullName evidence="1">Translation initiation factor IF-1</fullName>
    </recommendedName>
</protein>
<feature type="chain" id="PRO_0000095901" description="Translation initiation factor IF-1">
    <location>
        <begin position="1"/>
        <end position="72"/>
    </location>
</feature>
<feature type="domain" description="S1-like" evidence="1">
    <location>
        <begin position="1"/>
        <end position="72"/>
    </location>
</feature>
<proteinExistence type="inferred from homology"/>
<dbReference type="EMBL" id="AE003852">
    <property type="protein sequence ID" value="AAF94887.1"/>
    <property type="molecule type" value="Genomic_DNA"/>
</dbReference>
<dbReference type="PIR" id="A82164">
    <property type="entry name" value="A82164"/>
</dbReference>
<dbReference type="RefSeq" id="NP_231373.1">
    <property type="nucleotide sequence ID" value="NC_002505.1"/>
</dbReference>
<dbReference type="RefSeq" id="WP_001040192.1">
    <property type="nucleotide sequence ID" value="NZ_LT906614.1"/>
</dbReference>
<dbReference type="SMR" id="P65128"/>
<dbReference type="STRING" id="243277.VC_1737"/>
<dbReference type="DNASU" id="2613742"/>
<dbReference type="EnsemblBacteria" id="AAF94887">
    <property type="protein sequence ID" value="AAF94887"/>
    <property type="gene ID" value="VC_1737"/>
</dbReference>
<dbReference type="GeneID" id="97540801"/>
<dbReference type="KEGG" id="vch:VC_1737"/>
<dbReference type="PATRIC" id="fig|243277.26.peg.1660"/>
<dbReference type="eggNOG" id="COG0361">
    <property type="taxonomic scope" value="Bacteria"/>
</dbReference>
<dbReference type="HOGENOM" id="CLU_151267_1_0_6"/>
<dbReference type="PRO" id="PR:P65128"/>
<dbReference type="Proteomes" id="UP000000584">
    <property type="component" value="Chromosome 1"/>
</dbReference>
<dbReference type="GO" id="GO:0005829">
    <property type="term" value="C:cytosol"/>
    <property type="evidence" value="ECO:0000318"/>
    <property type="project" value="GO_Central"/>
</dbReference>
<dbReference type="GO" id="GO:0043022">
    <property type="term" value="F:ribosome binding"/>
    <property type="evidence" value="ECO:0000318"/>
    <property type="project" value="GO_Central"/>
</dbReference>
<dbReference type="GO" id="GO:0019843">
    <property type="term" value="F:rRNA binding"/>
    <property type="evidence" value="ECO:0007669"/>
    <property type="project" value="UniProtKB-UniRule"/>
</dbReference>
<dbReference type="GO" id="GO:0003743">
    <property type="term" value="F:translation initiation factor activity"/>
    <property type="evidence" value="ECO:0007669"/>
    <property type="project" value="UniProtKB-UniRule"/>
</dbReference>
<dbReference type="CDD" id="cd04451">
    <property type="entry name" value="S1_IF1"/>
    <property type="match status" value="1"/>
</dbReference>
<dbReference type="FunFam" id="2.40.50.140:FF:000002">
    <property type="entry name" value="Translation initiation factor IF-1"/>
    <property type="match status" value="1"/>
</dbReference>
<dbReference type="Gene3D" id="2.40.50.140">
    <property type="entry name" value="Nucleic acid-binding proteins"/>
    <property type="match status" value="1"/>
</dbReference>
<dbReference type="HAMAP" id="MF_00075">
    <property type="entry name" value="IF_1"/>
    <property type="match status" value="1"/>
</dbReference>
<dbReference type="InterPro" id="IPR012340">
    <property type="entry name" value="NA-bd_OB-fold"/>
</dbReference>
<dbReference type="InterPro" id="IPR006196">
    <property type="entry name" value="RNA-binding_domain_S1_IF1"/>
</dbReference>
<dbReference type="InterPro" id="IPR003029">
    <property type="entry name" value="S1_domain"/>
</dbReference>
<dbReference type="InterPro" id="IPR004368">
    <property type="entry name" value="TIF_IF1"/>
</dbReference>
<dbReference type="NCBIfam" id="TIGR00008">
    <property type="entry name" value="infA"/>
    <property type="match status" value="1"/>
</dbReference>
<dbReference type="PANTHER" id="PTHR33370">
    <property type="entry name" value="TRANSLATION INITIATION FACTOR IF-1, CHLOROPLASTIC"/>
    <property type="match status" value="1"/>
</dbReference>
<dbReference type="PANTHER" id="PTHR33370:SF1">
    <property type="entry name" value="TRANSLATION INITIATION FACTOR IF-1, CHLOROPLASTIC"/>
    <property type="match status" value="1"/>
</dbReference>
<dbReference type="Pfam" id="PF01176">
    <property type="entry name" value="eIF-1a"/>
    <property type="match status" value="1"/>
</dbReference>
<dbReference type="SMART" id="SM00316">
    <property type="entry name" value="S1"/>
    <property type="match status" value="1"/>
</dbReference>
<dbReference type="SUPFAM" id="SSF50249">
    <property type="entry name" value="Nucleic acid-binding proteins"/>
    <property type="match status" value="1"/>
</dbReference>
<dbReference type="PROSITE" id="PS50832">
    <property type="entry name" value="S1_IF1_TYPE"/>
    <property type="match status" value="1"/>
</dbReference>
<name>IF1_VIBCH</name>
<gene>
    <name evidence="1" type="primary">infA</name>
    <name type="ordered locus">VC_1737</name>
</gene>
<accession>P65128</accession>
<accession>Q9KRA5</accession>
<sequence length="72" mass="8223">MAKEDVIEMQGTVLDTLPNTMFRVELENGHVVTAHISGKMRKNYIRILTGDKVTVEMTPYDLSKGRIVFRAR</sequence>
<reference key="1">
    <citation type="journal article" date="2000" name="Nature">
        <title>DNA sequence of both chromosomes of the cholera pathogen Vibrio cholerae.</title>
        <authorList>
            <person name="Heidelberg J.F."/>
            <person name="Eisen J.A."/>
            <person name="Nelson W.C."/>
            <person name="Clayton R.A."/>
            <person name="Gwinn M.L."/>
            <person name="Dodson R.J."/>
            <person name="Haft D.H."/>
            <person name="Hickey E.K."/>
            <person name="Peterson J.D."/>
            <person name="Umayam L.A."/>
            <person name="Gill S.R."/>
            <person name="Nelson K.E."/>
            <person name="Read T.D."/>
            <person name="Tettelin H."/>
            <person name="Richardson D.L."/>
            <person name="Ermolaeva M.D."/>
            <person name="Vamathevan J.J."/>
            <person name="Bass S."/>
            <person name="Qin H."/>
            <person name="Dragoi I."/>
            <person name="Sellers P."/>
            <person name="McDonald L.A."/>
            <person name="Utterback T.R."/>
            <person name="Fleischmann R.D."/>
            <person name="Nierman W.C."/>
            <person name="White O."/>
            <person name="Salzberg S.L."/>
            <person name="Smith H.O."/>
            <person name="Colwell R.R."/>
            <person name="Mekalanos J.J."/>
            <person name="Venter J.C."/>
            <person name="Fraser C.M."/>
        </authorList>
    </citation>
    <scope>NUCLEOTIDE SEQUENCE [LARGE SCALE GENOMIC DNA]</scope>
    <source>
        <strain>ATCC 39315 / El Tor Inaba N16961</strain>
    </source>
</reference>
<comment type="function">
    <text evidence="1">One of the essential components for the initiation of protein synthesis. Stabilizes the binding of IF-2 and IF-3 on the 30S subunit to which N-formylmethionyl-tRNA(fMet) subsequently binds. Helps modulate mRNA selection, yielding the 30S pre-initiation complex (PIC). Upon addition of the 50S ribosomal subunit IF-1, IF-2 and IF-3 are released leaving the mature 70S translation initiation complex.</text>
</comment>
<comment type="subunit">
    <text evidence="1">Component of the 30S ribosomal translation pre-initiation complex which assembles on the 30S ribosome in the order IF-2 and IF-3, IF-1 and N-formylmethionyl-tRNA(fMet); mRNA recruitment can occur at any time during PIC assembly.</text>
</comment>
<comment type="subcellular location">
    <subcellularLocation>
        <location evidence="1">Cytoplasm</location>
    </subcellularLocation>
</comment>
<comment type="similarity">
    <text evidence="1">Belongs to the IF-1 family.</text>
</comment>